<organism>
    <name type="scientific">Escherichia coli (strain UTI89 / UPEC)</name>
    <dbReference type="NCBI Taxonomy" id="364106"/>
    <lineage>
        <taxon>Bacteria</taxon>
        <taxon>Pseudomonadati</taxon>
        <taxon>Pseudomonadota</taxon>
        <taxon>Gammaproteobacteria</taxon>
        <taxon>Enterobacterales</taxon>
        <taxon>Enterobacteriaceae</taxon>
        <taxon>Escherichia</taxon>
    </lineage>
</organism>
<feature type="chain" id="PRO_0000259110" description="Large ribosomal subunit protein bL31B">
    <location>
        <begin position="1"/>
        <end position="87"/>
    </location>
</feature>
<protein>
    <recommendedName>
        <fullName evidence="1">Large ribosomal subunit protein bL31B</fullName>
    </recommendedName>
    <alternativeName>
        <fullName evidence="2">50S ribosomal protein L31 type B</fullName>
    </alternativeName>
</protein>
<reference key="1">
    <citation type="journal article" date="2006" name="Proc. Natl. Acad. Sci. U.S.A.">
        <title>Identification of genes subject to positive selection in uropathogenic strains of Escherichia coli: a comparative genomics approach.</title>
        <authorList>
            <person name="Chen S.L."/>
            <person name="Hung C.-S."/>
            <person name="Xu J."/>
            <person name="Reigstad C.S."/>
            <person name="Magrini V."/>
            <person name="Sabo A."/>
            <person name="Blasiar D."/>
            <person name="Bieri T."/>
            <person name="Meyer R.R."/>
            <person name="Ozersky P."/>
            <person name="Armstrong J.R."/>
            <person name="Fulton R.S."/>
            <person name="Latreille J.P."/>
            <person name="Spieth J."/>
            <person name="Hooton T.M."/>
            <person name="Mardis E.R."/>
            <person name="Hultgren S.J."/>
            <person name="Gordon J.I."/>
        </authorList>
    </citation>
    <scope>NUCLEOTIDE SEQUENCE [LARGE SCALE GENOMIC DNA]</scope>
    <source>
        <strain>UTI89 / UPEC</strain>
    </source>
</reference>
<evidence type="ECO:0000255" key="1">
    <source>
        <dbReference type="HAMAP-Rule" id="MF_00502"/>
    </source>
</evidence>
<evidence type="ECO:0000305" key="2"/>
<sequence length="87" mass="9920">MKPNIHPEYRTVVFHDTSVDEYFKIGSTIKTDREIELDGVTYPYVTIDVSSKSHPFYTGKLRTVASEGNVARFTQRFGRFVSTKKGA</sequence>
<gene>
    <name evidence="1" type="primary">rpmE2</name>
    <name type="ordered locus">UTI89_C0314</name>
</gene>
<proteinExistence type="inferred from homology"/>
<name>RL31B_ECOUT</name>
<keyword id="KW-0687">Ribonucleoprotein</keyword>
<keyword id="KW-0689">Ribosomal protein</keyword>
<accession>Q1RFP9</accession>
<comment type="subunit">
    <text evidence="1">Part of the 50S ribosomal subunit.</text>
</comment>
<comment type="similarity">
    <text evidence="1">Belongs to the bacterial ribosomal protein bL31 family. Type B subfamily.</text>
</comment>
<comment type="sequence caution" evidence="2">
    <conflict type="erroneous initiation">
        <sequence resource="EMBL-CDS" id="ABE05815"/>
    </conflict>
</comment>
<dbReference type="EMBL" id="CP000243">
    <property type="protein sequence ID" value="ABE05815.1"/>
    <property type="status" value="ALT_INIT"/>
    <property type="molecule type" value="Genomic_DNA"/>
</dbReference>
<dbReference type="RefSeq" id="WP_000803998.1">
    <property type="nucleotide sequence ID" value="NZ_CP064825.1"/>
</dbReference>
<dbReference type="SMR" id="Q1RFP9"/>
<dbReference type="KEGG" id="eci:UTI89_C0314"/>
<dbReference type="HOGENOM" id="CLU_114306_2_1_6"/>
<dbReference type="Proteomes" id="UP000001952">
    <property type="component" value="Chromosome"/>
</dbReference>
<dbReference type="GO" id="GO:1990904">
    <property type="term" value="C:ribonucleoprotein complex"/>
    <property type="evidence" value="ECO:0007669"/>
    <property type="project" value="UniProtKB-KW"/>
</dbReference>
<dbReference type="GO" id="GO:0005840">
    <property type="term" value="C:ribosome"/>
    <property type="evidence" value="ECO:0007669"/>
    <property type="project" value="UniProtKB-KW"/>
</dbReference>
<dbReference type="GO" id="GO:0003735">
    <property type="term" value="F:structural constituent of ribosome"/>
    <property type="evidence" value="ECO:0007669"/>
    <property type="project" value="InterPro"/>
</dbReference>
<dbReference type="GO" id="GO:0006412">
    <property type="term" value="P:translation"/>
    <property type="evidence" value="ECO:0007669"/>
    <property type="project" value="UniProtKB-UniRule"/>
</dbReference>
<dbReference type="FunFam" id="4.10.830.30:FF:000002">
    <property type="entry name" value="50S ribosomal protein L31 type B"/>
    <property type="match status" value="1"/>
</dbReference>
<dbReference type="Gene3D" id="4.10.830.30">
    <property type="entry name" value="Ribosomal protein L31"/>
    <property type="match status" value="1"/>
</dbReference>
<dbReference type="HAMAP" id="MF_00502">
    <property type="entry name" value="Ribosomal_bL31_2"/>
    <property type="match status" value="1"/>
</dbReference>
<dbReference type="InterPro" id="IPR034704">
    <property type="entry name" value="Ribosomal_bL28/bL31-like_sf"/>
</dbReference>
<dbReference type="InterPro" id="IPR002150">
    <property type="entry name" value="Ribosomal_bL31"/>
</dbReference>
<dbReference type="InterPro" id="IPR027493">
    <property type="entry name" value="Ribosomal_bL31_B"/>
</dbReference>
<dbReference type="InterPro" id="IPR042105">
    <property type="entry name" value="Ribosomal_bL31_sf"/>
</dbReference>
<dbReference type="NCBIfam" id="TIGR00105">
    <property type="entry name" value="L31"/>
    <property type="match status" value="1"/>
</dbReference>
<dbReference type="NCBIfam" id="NF002462">
    <property type="entry name" value="PRK01678.1"/>
    <property type="match status" value="1"/>
</dbReference>
<dbReference type="PANTHER" id="PTHR33280">
    <property type="entry name" value="50S RIBOSOMAL PROTEIN L31, CHLOROPLASTIC"/>
    <property type="match status" value="1"/>
</dbReference>
<dbReference type="PANTHER" id="PTHR33280:SF1">
    <property type="entry name" value="LARGE RIBOSOMAL SUBUNIT PROTEIN BL31C"/>
    <property type="match status" value="1"/>
</dbReference>
<dbReference type="Pfam" id="PF01197">
    <property type="entry name" value="Ribosomal_L31"/>
    <property type="match status" value="1"/>
</dbReference>
<dbReference type="PRINTS" id="PR01249">
    <property type="entry name" value="RIBOSOMALL31"/>
</dbReference>
<dbReference type="SUPFAM" id="SSF143800">
    <property type="entry name" value="L28p-like"/>
    <property type="match status" value="1"/>
</dbReference>
<dbReference type="PROSITE" id="PS01143">
    <property type="entry name" value="RIBOSOMAL_L31"/>
    <property type="match status" value="1"/>
</dbReference>